<dbReference type="EC" id="2.7.7.6" evidence="1"/>
<dbReference type="EMBL" id="CP000472">
    <property type="protein sequence ID" value="ACJ27155.1"/>
    <property type="molecule type" value="Genomic_DNA"/>
</dbReference>
<dbReference type="RefSeq" id="WP_020910538.1">
    <property type="nucleotide sequence ID" value="NC_011566.1"/>
</dbReference>
<dbReference type="SMR" id="B8CHM9"/>
<dbReference type="STRING" id="225849.swp_0320"/>
<dbReference type="KEGG" id="swp:swp_0320"/>
<dbReference type="eggNOG" id="COG1758">
    <property type="taxonomic scope" value="Bacteria"/>
</dbReference>
<dbReference type="HOGENOM" id="CLU_125406_5_3_6"/>
<dbReference type="OrthoDB" id="9796300at2"/>
<dbReference type="Proteomes" id="UP000000753">
    <property type="component" value="Chromosome"/>
</dbReference>
<dbReference type="GO" id="GO:0000428">
    <property type="term" value="C:DNA-directed RNA polymerase complex"/>
    <property type="evidence" value="ECO:0007669"/>
    <property type="project" value="UniProtKB-KW"/>
</dbReference>
<dbReference type="GO" id="GO:0003677">
    <property type="term" value="F:DNA binding"/>
    <property type="evidence" value="ECO:0007669"/>
    <property type="project" value="UniProtKB-UniRule"/>
</dbReference>
<dbReference type="GO" id="GO:0003899">
    <property type="term" value="F:DNA-directed RNA polymerase activity"/>
    <property type="evidence" value="ECO:0007669"/>
    <property type="project" value="UniProtKB-UniRule"/>
</dbReference>
<dbReference type="GO" id="GO:0006351">
    <property type="term" value="P:DNA-templated transcription"/>
    <property type="evidence" value="ECO:0007669"/>
    <property type="project" value="UniProtKB-UniRule"/>
</dbReference>
<dbReference type="Gene3D" id="3.90.940.10">
    <property type="match status" value="1"/>
</dbReference>
<dbReference type="HAMAP" id="MF_00366">
    <property type="entry name" value="RNApol_bact_RpoZ"/>
    <property type="match status" value="1"/>
</dbReference>
<dbReference type="InterPro" id="IPR003716">
    <property type="entry name" value="DNA-dir_RNA_pol_omega"/>
</dbReference>
<dbReference type="InterPro" id="IPR006110">
    <property type="entry name" value="Pol_omega/Rpo6/RPB6"/>
</dbReference>
<dbReference type="InterPro" id="IPR036161">
    <property type="entry name" value="RPB6/omega-like_sf"/>
</dbReference>
<dbReference type="NCBIfam" id="TIGR00690">
    <property type="entry name" value="rpoZ"/>
    <property type="match status" value="1"/>
</dbReference>
<dbReference type="PANTHER" id="PTHR34476">
    <property type="entry name" value="DNA-DIRECTED RNA POLYMERASE SUBUNIT OMEGA"/>
    <property type="match status" value="1"/>
</dbReference>
<dbReference type="PANTHER" id="PTHR34476:SF1">
    <property type="entry name" value="DNA-DIRECTED RNA POLYMERASE SUBUNIT OMEGA"/>
    <property type="match status" value="1"/>
</dbReference>
<dbReference type="Pfam" id="PF01192">
    <property type="entry name" value="RNA_pol_Rpb6"/>
    <property type="match status" value="1"/>
</dbReference>
<dbReference type="SMART" id="SM01409">
    <property type="entry name" value="RNA_pol_Rpb6"/>
    <property type="match status" value="1"/>
</dbReference>
<dbReference type="SUPFAM" id="SSF63562">
    <property type="entry name" value="RPB6/omega subunit-like"/>
    <property type="match status" value="1"/>
</dbReference>
<keyword id="KW-0240">DNA-directed RNA polymerase</keyword>
<keyword id="KW-0548">Nucleotidyltransferase</keyword>
<keyword id="KW-0804">Transcription</keyword>
<keyword id="KW-0808">Transferase</keyword>
<protein>
    <recommendedName>
        <fullName evidence="1">DNA-directed RNA polymerase subunit omega</fullName>
        <shortName evidence="1">RNAP omega subunit</shortName>
        <ecNumber evidence="1">2.7.7.6</ecNumber>
    </recommendedName>
    <alternativeName>
        <fullName evidence="1">RNA polymerase omega subunit</fullName>
    </alternativeName>
    <alternativeName>
        <fullName evidence="1">Transcriptase subunit omega</fullName>
    </alternativeName>
</protein>
<gene>
    <name evidence="1" type="primary">rpoZ</name>
    <name type="ordered locus">swp_0320</name>
</gene>
<sequence length="93" mass="10171">MARVTVEDAVNKIGNRFDMILVAARRARQIAVQGKDPMVEEENDKPTVIALREIELGLVTADTLDADERQTVREREAAEIAAVAAIAEGRNAI</sequence>
<name>RPOZ_SHEPW</name>
<evidence type="ECO:0000255" key="1">
    <source>
        <dbReference type="HAMAP-Rule" id="MF_00366"/>
    </source>
</evidence>
<accession>B8CHM9</accession>
<feature type="chain" id="PRO_1000121272" description="DNA-directed RNA polymerase subunit omega">
    <location>
        <begin position="1"/>
        <end position="93"/>
    </location>
</feature>
<proteinExistence type="inferred from homology"/>
<reference key="1">
    <citation type="journal article" date="2008" name="PLoS ONE">
        <title>Environmental adaptation: genomic analysis of the piezotolerant and psychrotolerant deep-sea iron reducing bacterium Shewanella piezotolerans WP3.</title>
        <authorList>
            <person name="Wang F."/>
            <person name="Wang J."/>
            <person name="Jian H."/>
            <person name="Zhang B."/>
            <person name="Li S."/>
            <person name="Wang F."/>
            <person name="Zeng X."/>
            <person name="Gao L."/>
            <person name="Bartlett D.H."/>
            <person name="Yu J."/>
            <person name="Hu S."/>
            <person name="Xiao X."/>
        </authorList>
    </citation>
    <scope>NUCLEOTIDE SEQUENCE [LARGE SCALE GENOMIC DNA]</scope>
    <source>
        <strain>WP3 / JCM 13877</strain>
    </source>
</reference>
<organism>
    <name type="scientific">Shewanella piezotolerans (strain WP3 / JCM 13877)</name>
    <dbReference type="NCBI Taxonomy" id="225849"/>
    <lineage>
        <taxon>Bacteria</taxon>
        <taxon>Pseudomonadati</taxon>
        <taxon>Pseudomonadota</taxon>
        <taxon>Gammaproteobacteria</taxon>
        <taxon>Alteromonadales</taxon>
        <taxon>Shewanellaceae</taxon>
        <taxon>Shewanella</taxon>
    </lineage>
</organism>
<comment type="function">
    <text evidence="1">Promotes RNA polymerase assembly. Latches the N- and C-terminal regions of the beta' subunit thereby facilitating its interaction with the beta and alpha subunits.</text>
</comment>
<comment type="catalytic activity">
    <reaction evidence="1">
        <text>RNA(n) + a ribonucleoside 5'-triphosphate = RNA(n+1) + diphosphate</text>
        <dbReference type="Rhea" id="RHEA:21248"/>
        <dbReference type="Rhea" id="RHEA-COMP:14527"/>
        <dbReference type="Rhea" id="RHEA-COMP:17342"/>
        <dbReference type="ChEBI" id="CHEBI:33019"/>
        <dbReference type="ChEBI" id="CHEBI:61557"/>
        <dbReference type="ChEBI" id="CHEBI:140395"/>
        <dbReference type="EC" id="2.7.7.6"/>
    </reaction>
</comment>
<comment type="subunit">
    <text evidence="1">The RNAP catalytic core consists of 2 alpha, 1 beta, 1 beta' and 1 omega subunit. When a sigma factor is associated with the core the holoenzyme is formed, which can initiate transcription.</text>
</comment>
<comment type="similarity">
    <text evidence="1">Belongs to the RNA polymerase subunit omega family.</text>
</comment>